<gene>
    <name type="primary">PAGE3</name>
    <name type="synonym">GAGED1</name>
</gene>
<protein>
    <recommendedName>
        <fullName>P antigen family member 3</fullName>
        <shortName>PAGE-3</shortName>
    </recommendedName>
    <alternativeName>
        <fullName>G antigen family D member 1</fullName>
    </alternativeName>
    <alternativeName>
        <fullName>Prostate-associated gene 3 protein</fullName>
    </alternativeName>
</protein>
<feature type="chain" id="PRO_0000247360" description="P antigen family member 3">
    <location>
        <begin position="1"/>
        <end position="113"/>
    </location>
</feature>
<feature type="region of interest" description="Disordered" evidence="1">
    <location>
        <begin position="1"/>
        <end position="61"/>
    </location>
</feature>
<feature type="region of interest" description="Disordered" evidence="1">
    <location>
        <begin position="78"/>
        <end position="113"/>
    </location>
</feature>
<feature type="compositionally biased region" description="Basic residues" evidence="1">
    <location>
        <begin position="1"/>
        <end position="12"/>
    </location>
</feature>
<feature type="sequence variant" id="VAR_027097" description="In dbSNP:rs4826381." evidence="2 3">
    <original>N</original>
    <variation>D</variation>
    <location>
        <position position="35"/>
    </location>
</feature>
<feature type="sequence variant" id="VAR_027098" description="In dbSNP:rs2296807.">
    <original>G</original>
    <variation>S</variation>
    <location>
        <position position="53"/>
    </location>
</feature>
<name>PAGE3_HUMAN</name>
<reference key="1">
    <citation type="journal article" date="2005" name="Nature">
        <title>The DNA sequence of the human X chromosome.</title>
        <authorList>
            <person name="Ross M.T."/>
            <person name="Grafham D.V."/>
            <person name="Coffey A.J."/>
            <person name="Scherer S."/>
            <person name="McLay K."/>
            <person name="Muzny D."/>
            <person name="Platzer M."/>
            <person name="Howell G.R."/>
            <person name="Burrows C."/>
            <person name="Bird C.P."/>
            <person name="Frankish A."/>
            <person name="Lovell F.L."/>
            <person name="Howe K.L."/>
            <person name="Ashurst J.L."/>
            <person name="Fulton R.S."/>
            <person name="Sudbrak R."/>
            <person name="Wen G."/>
            <person name="Jones M.C."/>
            <person name="Hurles M.E."/>
            <person name="Andrews T.D."/>
            <person name="Scott C.E."/>
            <person name="Searle S."/>
            <person name="Ramser J."/>
            <person name="Whittaker A."/>
            <person name="Deadman R."/>
            <person name="Carter N.P."/>
            <person name="Hunt S.E."/>
            <person name="Chen R."/>
            <person name="Cree A."/>
            <person name="Gunaratne P."/>
            <person name="Havlak P."/>
            <person name="Hodgson A."/>
            <person name="Metzker M.L."/>
            <person name="Richards S."/>
            <person name="Scott G."/>
            <person name="Steffen D."/>
            <person name="Sodergren E."/>
            <person name="Wheeler D.A."/>
            <person name="Worley K.C."/>
            <person name="Ainscough R."/>
            <person name="Ambrose K.D."/>
            <person name="Ansari-Lari M.A."/>
            <person name="Aradhya S."/>
            <person name="Ashwell R.I."/>
            <person name="Babbage A.K."/>
            <person name="Bagguley C.L."/>
            <person name="Ballabio A."/>
            <person name="Banerjee R."/>
            <person name="Barker G.E."/>
            <person name="Barlow K.F."/>
            <person name="Barrett I.P."/>
            <person name="Bates K.N."/>
            <person name="Beare D.M."/>
            <person name="Beasley H."/>
            <person name="Beasley O."/>
            <person name="Beck A."/>
            <person name="Bethel G."/>
            <person name="Blechschmidt K."/>
            <person name="Brady N."/>
            <person name="Bray-Allen S."/>
            <person name="Bridgeman A.M."/>
            <person name="Brown A.J."/>
            <person name="Brown M.J."/>
            <person name="Bonnin D."/>
            <person name="Bruford E.A."/>
            <person name="Buhay C."/>
            <person name="Burch P."/>
            <person name="Burford D."/>
            <person name="Burgess J."/>
            <person name="Burrill W."/>
            <person name="Burton J."/>
            <person name="Bye J.M."/>
            <person name="Carder C."/>
            <person name="Carrel L."/>
            <person name="Chako J."/>
            <person name="Chapman J.C."/>
            <person name="Chavez D."/>
            <person name="Chen E."/>
            <person name="Chen G."/>
            <person name="Chen Y."/>
            <person name="Chen Z."/>
            <person name="Chinault C."/>
            <person name="Ciccodicola A."/>
            <person name="Clark S.Y."/>
            <person name="Clarke G."/>
            <person name="Clee C.M."/>
            <person name="Clegg S."/>
            <person name="Clerc-Blankenburg K."/>
            <person name="Clifford K."/>
            <person name="Cobley V."/>
            <person name="Cole C.G."/>
            <person name="Conquer J.S."/>
            <person name="Corby N."/>
            <person name="Connor R.E."/>
            <person name="David R."/>
            <person name="Davies J."/>
            <person name="Davis C."/>
            <person name="Davis J."/>
            <person name="Delgado O."/>
            <person name="Deshazo D."/>
            <person name="Dhami P."/>
            <person name="Ding Y."/>
            <person name="Dinh H."/>
            <person name="Dodsworth S."/>
            <person name="Draper H."/>
            <person name="Dugan-Rocha S."/>
            <person name="Dunham A."/>
            <person name="Dunn M."/>
            <person name="Durbin K.J."/>
            <person name="Dutta I."/>
            <person name="Eades T."/>
            <person name="Ellwood M."/>
            <person name="Emery-Cohen A."/>
            <person name="Errington H."/>
            <person name="Evans K.L."/>
            <person name="Faulkner L."/>
            <person name="Francis F."/>
            <person name="Frankland J."/>
            <person name="Fraser A.E."/>
            <person name="Galgoczy P."/>
            <person name="Gilbert J."/>
            <person name="Gill R."/>
            <person name="Gloeckner G."/>
            <person name="Gregory S.G."/>
            <person name="Gribble S."/>
            <person name="Griffiths C."/>
            <person name="Grocock R."/>
            <person name="Gu Y."/>
            <person name="Gwilliam R."/>
            <person name="Hamilton C."/>
            <person name="Hart E.A."/>
            <person name="Hawes A."/>
            <person name="Heath P.D."/>
            <person name="Heitmann K."/>
            <person name="Hennig S."/>
            <person name="Hernandez J."/>
            <person name="Hinzmann B."/>
            <person name="Ho S."/>
            <person name="Hoffs M."/>
            <person name="Howden P.J."/>
            <person name="Huckle E.J."/>
            <person name="Hume J."/>
            <person name="Hunt P.J."/>
            <person name="Hunt A.R."/>
            <person name="Isherwood J."/>
            <person name="Jacob L."/>
            <person name="Johnson D."/>
            <person name="Jones S."/>
            <person name="de Jong P.J."/>
            <person name="Joseph S.S."/>
            <person name="Keenan S."/>
            <person name="Kelly S."/>
            <person name="Kershaw J.K."/>
            <person name="Khan Z."/>
            <person name="Kioschis P."/>
            <person name="Klages S."/>
            <person name="Knights A.J."/>
            <person name="Kosiura A."/>
            <person name="Kovar-Smith C."/>
            <person name="Laird G.K."/>
            <person name="Langford C."/>
            <person name="Lawlor S."/>
            <person name="Leversha M."/>
            <person name="Lewis L."/>
            <person name="Liu W."/>
            <person name="Lloyd C."/>
            <person name="Lloyd D.M."/>
            <person name="Loulseged H."/>
            <person name="Loveland J.E."/>
            <person name="Lovell J.D."/>
            <person name="Lozado R."/>
            <person name="Lu J."/>
            <person name="Lyne R."/>
            <person name="Ma J."/>
            <person name="Maheshwari M."/>
            <person name="Matthews L.H."/>
            <person name="McDowall J."/>
            <person name="McLaren S."/>
            <person name="McMurray A."/>
            <person name="Meidl P."/>
            <person name="Meitinger T."/>
            <person name="Milne S."/>
            <person name="Miner G."/>
            <person name="Mistry S.L."/>
            <person name="Morgan M."/>
            <person name="Morris S."/>
            <person name="Mueller I."/>
            <person name="Mullikin J.C."/>
            <person name="Nguyen N."/>
            <person name="Nordsiek G."/>
            <person name="Nyakatura G."/>
            <person name="O'dell C.N."/>
            <person name="Okwuonu G."/>
            <person name="Palmer S."/>
            <person name="Pandian R."/>
            <person name="Parker D."/>
            <person name="Parrish J."/>
            <person name="Pasternak S."/>
            <person name="Patel D."/>
            <person name="Pearce A.V."/>
            <person name="Pearson D.M."/>
            <person name="Pelan S.E."/>
            <person name="Perez L."/>
            <person name="Porter K.M."/>
            <person name="Ramsey Y."/>
            <person name="Reichwald K."/>
            <person name="Rhodes S."/>
            <person name="Ridler K.A."/>
            <person name="Schlessinger D."/>
            <person name="Schueler M.G."/>
            <person name="Sehra H.K."/>
            <person name="Shaw-Smith C."/>
            <person name="Shen H."/>
            <person name="Sheridan E.M."/>
            <person name="Shownkeen R."/>
            <person name="Skuce C.D."/>
            <person name="Smith M.L."/>
            <person name="Sotheran E.C."/>
            <person name="Steingruber H.E."/>
            <person name="Steward C.A."/>
            <person name="Storey R."/>
            <person name="Swann R.M."/>
            <person name="Swarbreck D."/>
            <person name="Tabor P.E."/>
            <person name="Taudien S."/>
            <person name="Taylor T."/>
            <person name="Teague B."/>
            <person name="Thomas K."/>
            <person name="Thorpe A."/>
            <person name="Timms K."/>
            <person name="Tracey A."/>
            <person name="Trevanion S."/>
            <person name="Tromans A.C."/>
            <person name="d'Urso M."/>
            <person name="Verduzco D."/>
            <person name="Villasana D."/>
            <person name="Waldron L."/>
            <person name="Wall M."/>
            <person name="Wang Q."/>
            <person name="Warren J."/>
            <person name="Warry G.L."/>
            <person name="Wei X."/>
            <person name="West A."/>
            <person name="Whitehead S.L."/>
            <person name="Whiteley M.N."/>
            <person name="Wilkinson J.E."/>
            <person name="Willey D.L."/>
            <person name="Williams G."/>
            <person name="Williams L."/>
            <person name="Williamson A."/>
            <person name="Williamson H."/>
            <person name="Wilming L."/>
            <person name="Woodmansey R.L."/>
            <person name="Wray P.W."/>
            <person name="Yen J."/>
            <person name="Zhang J."/>
            <person name="Zhou J."/>
            <person name="Zoghbi H."/>
            <person name="Zorilla S."/>
            <person name="Buck D."/>
            <person name="Reinhardt R."/>
            <person name="Poustka A."/>
            <person name="Rosenthal A."/>
            <person name="Lehrach H."/>
            <person name="Meindl A."/>
            <person name="Minx P.J."/>
            <person name="Hillier L.W."/>
            <person name="Willard H.F."/>
            <person name="Wilson R.K."/>
            <person name="Waterston R.H."/>
            <person name="Rice C.M."/>
            <person name="Vaudin M."/>
            <person name="Coulson A."/>
            <person name="Nelson D.L."/>
            <person name="Weinstock G."/>
            <person name="Sulston J.E."/>
            <person name="Durbin R.M."/>
            <person name="Hubbard T."/>
            <person name="Gibbs R.A."/>
            <person name="Beck S."/>
            <person name="Rogers J."/>
            <person name="Bentley D.R."/>
        </authorList>
    </citation>
    <scope>NUCLEOTIDE SEQUENCE [LARGE SCALE GENOMIC DNA]</scope>
</reference>
<reference key="2">
    <citation type="submission" date="2005-07" db="EMBL/GenBank/DDBJ databases">
        <authorList>
            <person name="Mural R.J."/>
            <person name="Istrail S."/>
            <person name="Sutton G.G."/>
            <person name="Florea L."/>
            <person name="Halpern A.L."/>
            <person name="Mobarry C.M."/>
            <person name="Lippert R."/>
            <person name="Walenz B."/>
            <person name="Shatkay H."/>
            <person name="Dew I."/>
            <person name="Miller J.R."/>
            <person name="Flanigan M.J."/>
            <person name="Edwards N.J."/>
            <person name="Bolanos R."/>
            <person name="Fasulo D."/>
            <person name="Halldorsson B.V."/>
            <person name="Hannenhalli S."/>
            <person name="Turner R."/>
            <person name="Yooseph S."/>
            <person name="Lu F."/>
            <person name="Nusskern D.R."/>
            <person name="Shue B.C."/>
            <person name="Zheng X.H."/>
            <person name="Zhong F."/>
            <person name="Delcher A.L."/>
            <person name="Huson D.H."/>
            <person name="Kravitz S.A."/>
            <person name="Mouchard L."/>
            <person name="Reinert K."/>
            <person name="Remington K.A."/>
            <person name="Clark A.G."/>
            <person name="Waterman M.S."/>
            <person name="Eichler E.E."/>
            <person name="Adams M.D."/>
            <person name="Hunkapiller M.W."/>
            <person name="Myers E.W."/>
            <person name="Venter J.C."/>
        </authorList>
    </citation>
    <scope>NUCLEOTIDE SEQUENCE [LARGE SCALE GENOMIC DNA]</scope>
    <scope>VARIANT ASP-35</scope>
</reference>
<reference key="3">
    <citation type="journal article" date="2004" name="Genome Res.">
        <title>The status, quality, and expansion of the NIH full-length cDNA project: the Mammalian Gene Collection (MGC).</title>
        <authorList>
            <consortium name="The MGC Project Team"/>
        </authorList>
    </citation>
    <scope>NUCLEOTIDE SEQUENCE [LARGE SCALE MRNA]</scope>
    <scope>VARIANT ASP-35</scope>
</reference>
<evidence type="ECO:0000256" key="1">
    <source>
        <dbReference type="SAM" id="MobiDB-lite"/>
    </source>
</evidence>
<evidence type="ECO:0000269" key="2">
    <source>
    </source>
</evidence>
<evidence type="ECO:0000269" key="3">
    <source ref="2"/>
</evidence>
<evidence type="ECO:0000305" key="4"/>
<proteinExistence type="evidence at protein level"/>
<sequence length="113" mass="12480">MSGHQRTRSRSRERRDDQDSNHPVGAVVAQELPSNDQLQQEEPPIESQDYTPGQERDEGALDFQVLGLAAYLWELTRSKTGGERGDGPNVKGEFLPNLEPVKIPEAGEGQPSV</sequence>
<organism>
    <name type="scientific">Homo sapiens</name>
    <name type="common">Human</name>
    <dbReference type="NCBI Taxonomy" id="9606"/>
    <lineage>
        <taxon>Eukaryota</taxon>
        <taxon>Metazoa</taxon>
        <taxon>Chordata</taxon>
        <taxon>Craniata</taxon>
        <taxon>Vertebrata</taxon>
        <taxon>Euteleostomi</taxon>
        <taxon>Mammalia</taxon>
        <taxon>Eutheria</taxon>
        <taxon>Euarchontoglires</taxon>
        <taxon>Primates</taxon>
        <taxon>Haplorrhini</taxon>
        <taxon>Catarrhini</taxon>
        <taxon>Hominidae</taxon>
        <taxon>Homo</taxon>
    </lineage>
</organism>
<keyword id="KW-1185">Reference proteome</keyword>
<comment type="interaction">
    <interactant intactId="EBI-10244544">
        <id>Q5JUK9</id>
    </interactant>
    <interactant intactId="EBI-10175124">
        <id>Q8IZU0</id>
        <label>FAM9B</label>
    </interactant>
    <organismsDiffer>false</organismsDiffer>
    <experiments>3</experiments>
</comment>
<comment type="interaction">
    <interactant intactId="EBI-10244544">
        <id>Q5JUK9</id>
    </interactant>
    <interactant intactId="EBI-2864512">
        <id>P50221</id>
        <label>MEOX1</label>
    </interactant>
    <organismsDiffer>false</organismsDiffer>
    <experiments>3</experiments>
</comment>
<comment type="interaction">
    <interactant intactId="EBI-10244544">
        <id>Q5JUK9</id>
    </interactant>
    <interactant intactId="EBI-347996">
        <id>O43765</id>
        <label>SGTA</label>
    </interactant>
    <organismsDiffer>false</organismsDiffer>
    <experiments>6</experiments>
</comment>
<comment type="interaction">
    <interactant intactId="EBI-10244544">
        <id>Q5JUK9</id>
    </interactant>
    <interactant intactId="EBI-744081">
        <id>Q96EQ0</id>
        <label>SGTB</label>
    </interactant>
    <organismsDiffer>false</organismsDiffer>
    <experiments>3</experiments>
</comment>
<comment type="similarity">
    <text evidence="4">Belongs to the GAGE family.</text>
</comment>
<accession>Q5JUK9</accession>
<accession>A5D6Y1</accession>
<dbReference type="EMBL" id="AL158819">
    <property type="status" value="NOT_ANNOTATED_CDS"/>
    <property type="molecule type" value="Genomic_DNA"/>
</dbReference>
<dbReference type="EMBL" id="CH471154">
    <property type="protein sequence ID" value="EAW93220.1"/>
    <property type="molecule type" value="Genomic_DNA"/>
</dbReference>
<dbReference type="EMBL" id="BC140001">
    <property type="protein sequence ID" value="AAI40002.1"/>
    <property type="molecule type" value="mRNA"/>
</dbReference>
<dbReference type="EMBL" id="BC140741">
    <property type="protein sequence ID" value="AAI40742.1"/>
    <property type="molecule type" value="mRNA"/>
</dbReference>
<dbReference type="EMBL" id="BC144449">
    <property type="protein sequence ID" value="AAI44450.1"/>
    <property type="molecule type" value="mRNA"/>
</dbReference>
<dbReference type="CCDS" id="CCDS35307.1"/>
<dbReference type="RefSeq" id="NP_001017931.3">
    <property type="nucleotide sequence ID" value="NM_001017931.3"/>
</dbReference>
<dbReference type="RefSeq" id="NP_001164723.2">
    <property type="nucleotide sequence ID" value="NM_001171252.2"/>
</dbReference>
<dbReference type="RefSeq" id="NP_001290542.2">
    <property type="nucleotide sequence ID" value="NM_001303613.2"/>
</dbReference>
<dbReference type="RefSeq" id="XP_016884771.1">
    <property type="nucleotide sequence ID" value="XM_017029282.3"/>
</dbReference>
<dbReference type="RefSeq" id="XP_054182480.1">
    <property type="nucleotide sequence ID" value="XM_054326505.1"/>
</dbReference>
<dbReference type="FunCoup" id="Q5JUK9">
    <property type="interactions" value="1"/>
</dbReference>
<dbReference type="IntAct" id="Q5JUK9">
    <property type="interactions" value="4"/>
</dbReference>
<dbReference type="STRING" id="9606.ENSP00000364089"/>
<dbReference type="BioMuta" id="PAGE3"/>
<dbReference type="DMDM" id="74742310"/>
<dbReference type="PaxDb" id="9606-ENSP00000364089"/>
<dbReference type="Antibodypedia" id="71531">
    <property type="antibodies" value="32 antibodies from 15 providers"/>
</dbReference>
<dbReference type="DNASU" id="139793"/>
<dbReference type="Ensembl" id="ENST00000374951.6">
    <property type="protein sequence ID" value="ENSP00000364089.1"/>
    <property type="gene ID" value="ENSG00000204279.8"/>
</dbReference>
<dbReference type="Ensembl" id="ENST00000519203.1">
    <property type="protein sequence ID" value="ENSP00000429571.1"/>
    <property type="gene ID" value="ENSG00000204279.8"/>
</dbReference>
<dbReference type="GeneID" id="139793"/>
<dbReference type="KEGG" id="hsa:139793"/>
<dbReference type="MANE-Select" id="ENST00000374951.6">
    <property type="protein sequence ID" value="ENSP00000364089.1"/>
    <property type="RefSeq nucleotide sequence ID" value="NM_001017931.3"/>
    <property type="RefSeq protein sequence ID" value="NP_001017931.3"/>
</dbReference>
<dbReference type="UCSC" id="uc022bxs.4">
    <property type="organism name" value="human"/>
</dbReference>
<dbReference type="AGR" id="HGNC:4110"/>
<dbReference type="CTD" id="139793"/>
<dbReference type="GeneCards" id="PAGE3"/>
<dbReference type="HGNC" id="HGNC:4110">
    <property type="gene designation" value="PAGE3"/>
</dbReference>
<dbReference type="HPA" id="ENSG00000204279">
    <property type="expression patterns" value="Tissue enriched (testis)"/>
</dbReference>
<dbReference type="MIM" id="300739">
    <property type="type" value="gene"/>
</dbReference>
<dbReference type="neXtProt" id="NX_Q5JUK9"/>
<dbReference type="VEuPathDB" id="HostDB:ENSG00000204279"/>
<dbReference type="eggNOG" id="ENOG502TF3A">
    <property type="taxonomic scope" value="Eukaryota"/>
</dbReference>
<dbReference type="GeneTree" id="ENSGT00940000153097"/>
<dbReference type="HOGENOM" id="CLU_150116_2_0_1"/>
<dbReference type="InParanoid" id="Q5JUK9"/>
<dbReference type="OMA" id="DEQDSNH"/>
<dbReference type="OrthoDB" id="9538795at2759"/>
<dbReference type="PAN-GO" id="Q5JUK9">
    <property type="GO annotations" value="0 GO annotations based on evolutionary models"/>
</dbReference>
<dbReference type="PhylomeDB" id="Q5JUK9"/>
<dbReference type="TreeFam" id="TF340669"/>
<dbReference type="PathwayCommons" id="Q5JUK9"/>
<dbReference type="SignaLink" id="Q5JUK9"/>
<dbReference type="BioGRID-ORCS" id="139793">
    <property type="hits" value="2 hits in 255 CRISPR screens"/>
</dbReference>
<dbReference type="GenomeRNAi" id="139793"/>
<dbReference type="Pharos" id="Q5JUK9">
    <property type="development level" value="Tdark"/>
</dbReference>
<dbReference type="PRO" id="PR:Q5JUK9"/>
<dbReference type="Proteomes" id="UP000005640">
    <property type="component" value="Chromosome X"/>
</dbReference>
<dbReference type="RNAct" id="Q5JUK9">
    <property type="molecule type" value="protein"/>
</dbReference>
<dbReference type="Bgee" id="ENSG00000204279">
    <property type="expression patterns" value="Expressed in male germ line stem cell (sensu Vertebrata) in testis and 21 other cell types or tissues"/>
</dbReference>
<dbReference type="InterPro" id="IPR031320">
    <property type="entry name" value="GAGE"/>
</dbReference>
<dbReference type="InterPro" id="IPR008625">
    <property type="entry name" value="GAGE_fam"/>
</dbReference>
<dbReference type="PANTHER" id="PTHR14047:SF1">
    <property type="entry name" value="P ANTIGEN FAMILY MEMBER 3"/>
    <property type="match status" value="1"/>
</dbReference>
<dbReference type="PANTHER" id="PTHR14047">
    <property type="entry name" value="P ANTIGEN FAMILY MEMBER 5-RELATED"/>
    <property type="match status" value="1"/>
</dbReference>
<dbReference type="Pfam" id="PF05831">
    <property type="entry name" value="GAGE"/>
    <property type="match status" value="1"/>
</dbReference>
<dbReference type="SMART" id="SM01379">
    <property type="entry name" value="GAGE"/>
    <property type="match status" value="1"/>
</dbReference>